<organism>
    <name type="scientific">Aeropyrum pernix (strain ATCC 700893 / DSM 11879 / JCM 9820 / NBRC 100138 / K1)</name>
    <dbReference type="NCBI Taxonomy" id="272557"/>
    <lineage>
        <taxon>Archaea</taxon>
        <taxon>Thermoproteota</taxon>
        <taxon>Thermoprotei</taxon>
        <taxon>Desulfurococcales</taxon>
        <taxon>Desulfurococcaceae</taxon>
        <taxon>Aeropyrum</taxon>
    </lineage>
</organism>
<evidence type="ECO:0000255" key="1">
    <source>
        <dbReference type="HAMAP-Rule" id="MF_00453"/>
    </source>
</evidence>
<protein>
    <recommendedName>
        <fullName evidence="1">Phosphoenolpyruvate carboxykinase (ATP)</fullName>
        <shortName evidence="1">PCK</shortName>
        <shortName evidence="1">PEP carboxykinase</shortName>
        <shortName evidence="1">PEPCK</shortName>
        <ecNumber evidence="1">4.1.1.49</ecNumber>
    </recommendedName>
</protein>
<gene>
    <name evidence="1" type="primary">pckA</name>
    <name type="ordered locus">APE_0033.1</name>
</gene>
<dbReference type="EC" id="4.1.1.49" evidence="1"/>
<dbReference type="EMBL" id="BA000002">
    <property type="protein sequence ID" value="BAA78942.2"/>
    <property type="molecule type" value="Genomic_DNA"/>
</dbReference>
<dbReference type="PIR" id="D72755">
    <property type="entry name" value="D72755"/>
</dbReference>
<dbReference type="RefSeq" id="WP_010865442.1">
    <property type="nucleotide sequence ID" value="NC_000854.2"/>
</dbReference>
<dbReference type="SMR" id="Q9YG68"/>
<dbReference type="STRING" id="272557.APE_0033.1"/>
<dbReference type="EnsemblBacteria" id="BAA78942">
    <property type="protein sequence ID" value="BAA78942"/>
    <property type="gene ID" value="APE_0033.1"/>
</dbReference>
<dbReference type="GeneID" id="1445595"/>
<dbReference type="KEGG" id="ape:APE_0033.1"/>
<dbReference type="eggNOG" id="arCOG06073">
    <property type="taxonomic scope" value="Archaea"/>
</dbReference>
<dbReference type="UniPathway" id="UPA00138"/>
<dbReference type="Proteomes" id="UP000002518">
    <property type="component" value="Chromosome"/>
</dbReference>
<dbReference type="GO" id="GO:0005737">
    <property type="term" value="C:cytoplasm"/>
    <property type="evidence" value="ECO:0007669"/>
    <property type="project" value="UniProtKB-SubCell"/>
</dbReference>
<dbReference type="GO" id="GO:0005524">
    <property type="term" value="F:ATP binding"/>
    <property type="evidence" value="ECO:0007669"/>
    <property type="project" value="UniProtKB-UniRule"/>
</dbReference>
<dbReference type="GO" id="GO:0004612">
    <property type="term" value="F:phosphoenolpyruvate carboxykinase (ATP) activity"/>
    <property type="evidence" value="ECO:0007669"/>
    <property type="project" value="UniProtKB-UniRule"/>
</dbReference>
<dbReference type="GO" id="GO:0006094">
    <property type="term" value="P:gluconeogenesis"/>
    <property type="evidence" value="ECO:0007669"/>
    <property type="project" value="UniProtKB-UniRule"/>
</dbReference>
<dbReference type="Gene3D" id="3.90.228.20">
    <property type="match status" value="2"/>
</dbReference>
<dbReference type="HAMAP" id="MF_00453">
    <property type="entry name" value="PEPCK_ATP"/>
    <property type="match status" value="1"/>
</dbReference>
<dbReference type="InterPro" id="IPR001272">
    <property type="entry name" value="PEP_carboxykinase_ATP"/>
</dbReference>
<dbReference type="InterPro" id="IPR013035">
    <property type="entry name" value="PEP_carboxykinase_C"/>
</dbReference>
<dbReference type="InterPro" id="IPR008210">
    <property type="entry name" value="PEP_carboxykinase_N"/>
</dbReference>
<dbReference type="NCBIfam" id="NF006821">
    <property type="entry name" value="PRK09344.1-3"/>
    <property type="match status" value="1"/>
</dbReference>
<dbReference type="Pfam" id="PF01293">
    <property type="entry name" value="PEPCK_ATP"/>
    <property type="match status" value="1"/>
</dbReference>
<dbReference type="PIRSF" id="PIRSF006294">
    <property type="entry name" value="PEP_crbxkin"/>
    <property type="match status" value="1"/>
</dbReference>
<dbReference type="SUPFAM" id="SSF68923">
    <property type="entry name" value="PEP carboxykinase N-terminal domain"/>
    <property type="match status" value="1"/>
</dbReference>
<dbReference type="SUPFAM" id="SSF53795">
    <property type="entry name" value="PEP carboxykinase-like"/>
    <property type="match status" value="1"/>
</dbReference>
<keyword id="KW-0067">ATP-binding</keyword>
<keyword id="KW-0963">Cytoplasm</keyword>
<keyword id="KW-0210">Decarboxylase</keyword>
<keyword id="KW-0312">Gluconeogenesis</keyword>
<keyword id="KW-0456">Lyase</keyword>
<keyword id="KW-0547">Nucleotide-binding</keyword>
<keyword id="KW-1185">Reference proteome</keyword>
<accession>Q9YG68</accession>
<comment type="function">
    <text evidence="1">Involved in the gluconeogenesis. Catalyzes the conversion of oxaloacetate (OAA) to phosphoenolpyruvate (PEP) through direct phosphoryl transfer between the nucleoside triphosphate and OAA.</text>
</comment>
<comment type="catalytic activity">
    <reaction evidence="1">
        <text>oxaloacetate + ATP = phosphoenolpyruvate + ADP + CO2</text>
        <dbReference type="Rhea" id="RHEA:18617"/>
        <dbReference type="ChEBI" id="CHEBI:16452"/>
        <dbReference type="ChEBI" id="CHEBI:16526"/>
        <dbReference type="ChEBI" id="CHEBI:30616"/>
        <dbReference type="ChEBI" id="CHEBI:58702"/>
        <dbReference type="ChEBI" id="CHEBI:456216"/>
        <dbReference type="EC" id="4.1.1.49"/>
    </reaction>
</comment>
<comment type="pathway">
    <text evidence="1">Carbohydrate biosynthesis; gluconeogenesis.</text>
</comment>
<comment type="subcellular location">
    <subcellularLocation>
        <location evidence="1">Cytoplasm</location>
    </subcellularLocation>
</comment>
<comment type="similarity">
    <text evidence="1">Belongs to the phosphoenolpyruvate carboxykinase (ATP) family.</text>
</comment>
<name>PCKA_AERPE</name>
<sequence>MEDVVKALAKEVLSSADIEWNPPPGLLRRESSRYAGFTKTGSLAVVSSKARARRPDRTRVKYLRDEGFDRLVVDAWDYVVKASFYAVERCVGSGDRRFRILALVEKSYPHLALMSHLNFFPCGSTGSYDMVTIDVPSYSDVWMLVERRSNSTLVLGSDYYGELKMSFLRLAMNEARDRHLGVGLHAASKLYRVRVEGSMREVGVLVFGLSGTGKTTLTVEDHGLREPEYVRVMQDDIVILDWRGVAHGTEMNLYPKTDSVPELKKLEPAVLHPDAVLENVVVKSDGTPDFTDLSLTRNARALAIREAIPIASGSVDLMGTNVLVFLTRRPEMPPLARLTSPYQAVAYFMLGESFRTSAEAGKPEPVRVPGFDPFMLEPKWRSAYSLLDLIKSLNMNVYVMNTGHAKDRKIPPELSKHLLLSLVKENVDWKLDKHMGFEIAVRAGGVNLDGYNPEELYGESYVRVVDLLRRDRQEFLRSIPSVSFLADYV</sequence>
<feature type="chain" id="PRO_0000203861" description="Phosphoenolpyruvate carboxykinase (ATP)">
    <location>
        <begin position="1"/>
        <end position="489"/>
    </location>
</feature>
<feature type="binding site" evidence="1">
    <location>
        <position position="53"/>
    </location>
    <ligand>
        <name>substrate</name>
    </ligand>
</feature>
<feature type="binding site" evidence="1">
    <location>
        <position position="159"/>
    </location>
    <ligand>
        <name>substrate</name>
    </ligand>
</feature>
<feature type="binding site" evidence="1">
    <location>
        <position position="185"/>
    </location>
    <ligand>
        <name>ATP</name>
        <dbReference type="ChEBI" id="CHEBI:30616"/>
    </ligand>
</feature>
<feature type="binding site" evidence="1">
    <location>
        <begin position="208"/>
        <end position="216"/>
    </location>
    <ligand>
        <name>ATP</name>
        <dbReference type="ChEBI" id="CHEBI:30616"/>
    </ligand>
</feature>
<feature type="binding site" evidence="1">
    <location>
        <position position="258"/>
    </location>
    <ligand>
        <name>ATP</name>
        <dbReference type="ChEBI" id="CHEBI:30616"/>
    </ligand>
</feature>
<feature type="binding site" evidence="1">
    <location>
        <position position="300"/>
    </location>
    <ligand>
        <name>ATP</name>
        <dbReference type="ChEBI" id="CHEBI:30616"/>
    </ligand>
</feature>
<feature type="binding site" evidence="1">
    <location>
        <position position="300"/>
    </location>
    <ligand>
        <name>substrate</name>
    </ligand>
</feature>
<feature type="binding site" evidence="1">
    <location>
        <begin position="409"/>
        <end position="410"/>
    </location>
    <ligand>
        <name>ATP</name>
        <dbReference type="ChEBI" id="CHEBI:30616"/>
    </ligand>
</feature>
<feature type="binding site" evidence="1">
    <location>
        <position position="415"/>
    </location>
    <ligand>
        <name>ATP</name>
        <dbReference type="ChEBI" id="CHEBI:30616"/>
    </ligand>
</feature>
<reference key="1">
    <citation type="journal article" date="1999" name="DNA Res.">
        <title>Complete genome sequence of an aerobic hyper-thermophilic crenarchaeon, Aeropyrum pernix K1.</title>
        <authorList>
            <person name="Kawarabayasi Y."/>
            <person name="Hino Y."/>
            <person name="Horikawa H."/>
            <person name="Yamazaki S."/>
            <person name="Haikawa Y."/>
            <person name="Jin-no K."/>
            <person name="Takahashi M."/>
            <person name="Sekine M."/>
            <person name="Baba S."/>
            <person name="Ankai A."/>
            <person name="Kosugi H."/>
            <person name="Hosoyama A."/>
            <person name="Fukui S."/>
            <person name="Nagai Y."/>
            <person name="Nishijima K."/>
            <person name="Nakazawa H."/>
            <person name="Takamiya M."/>
            <person name="Masuda S."/>
            <person name="Funahashi T."/>
            <person name="Tanaka T."/>
            <person name="Kudoh Y."/>
            <person name="Yamazaki J."/>
            <person name="Kushida N."/>
            <person name="Oguchi A."/>
            <person name="Aoki K."/>
            <person name="Kubota K."/>
            <person name="Nakamura Y."/>
            <person name="Nomura N."/>
            <person name="Sako Y."/>
            <person name="Kikuchi H."/>
        </authorList>
    </citation>
    <scope>NUCLEOTIDE SEQUENCE [LARGE SCALE GENOMIC DNA]</scope>
    <source>
        <strain>ATCC 700893 / DSM 11879 / JCM 9820 / NBRC 100138 / K1</strain>
    </source>
</reference>
<proteinExistence type="inferred from homology"/>